<protein>
    <recommendedName>
        <fullName>Sex-determining region Y protein</fullName>
    </recommendedName>
    <alternativeName>
        <fullName>Testis-determining factor</fullName>
    </alternativeName>
</protein>
<organism>
    <name type="scientific">Orcinus orca</name>
    <name type="common">Killer whale</name>
    <name type="synonym">Delphinus orca</name>
    <dbReference type="NCBI Taxonomy" id="9733"/>
    <lineage>
        <taxon>Eukaryota</taxon>
        <taxon>Metazoa</taxon>
        <taxon>Chordata</taxon>
        <taxon>Craniata</taxon>
        <taxon>Vertebrata</taxon>
        <taxon>Euteleostomi</taxon>
        <taxon>Mammalia</taxon>
        <taxon>Eutheria</taxon>
        <taxon>Laurasiatheria</taxon>
        <taxon>Artiodactyla</taxon>
        <taxon>Whippomorpha</taxon>
        <taxon>Cetacea</taxon>
        <taxon>Odontoceti</taxon>
        <taxon>Delphinidae</taxon>
        <taxon>Orcinus</taxon>
    </lineage>
</organism>
<keyword id="KW-0010">Activator</keyword>
<keyword id="KW-0112">Calmodulin-binding</keyword>
<keyword id="KW-0963">Cytoplasm</keyword>
<keyword id="KW-0221">Differentiation</keyword>
<keyword id="KW-0238">DNA-binding</keyword>
<keyword id="KW-0539">Nucleus</keyword>
<keyword id="KW-0726">Sexual differentiation</keyword>
<keyword id="KW-0804">Transcription</keyword>
<keyword id="KW-0805">Transcription regulation</keyword>
<name>SRY_ORCOR</name>
<proteinExistence type="inferred from homology"/>
<feature type="chain" id="PRO_0000048693" description="Sex-determining region Y protein">
    <location>
        <begin position="1"/>
        <end position="201"/>
    </location>
</feature>
<feature type="DNA-binding region" description="HMG box" evidence="3">
    <location>
        <begin position="54"/>
        <end position="122"/>
    </location>
</feature>
<feature type="region of interest" description="Disordered" evidence="4">
    <location>
        <begin position="162"/>
        <end position="201"/>
    </location>
</feature>
<feature type="compositionally biased region" description="Polar residues" evidence="4">
    <location>
        <begin position="186"/>
        <end position="195"/>
    </location>
</feature>
<gene>
    <name type="primary">SRY</name>
    <name type="synonym">TDF</name>
</gene>
<accession>Q864P5</accession>
<comment type="function">
    <text evidence="1 2">Transcriptional regulator that controls a genetic switch in male development. It is necessary and sufficient for initiating male sex determination by directing the development of supporting cell precursors (pre-Sertoli cells) as Sertoli rather than granulosa cells. Involved in different aspects of gene regulation including promoter activation or repression. Binds to the DNA consensus sequence 5'-[AT]AACAA[AT]-3'. SRY HMG box recognizes DNA by partial intercalation in the minor groove and promotes DNA bending. Also involved in pre-mRNA splicing (By similarity). In male adult brain involved in the maintenance of motor functions of dopaminergic neurons (By similarity).</text>
</comment>
<comment type="subunit">
    <text evidence="2">Interacts with CALM, EP300, HDAC3, KPNB1, ZNF208 isoform KRAB-O, PARP1, SLC9A3R2 and WT1. The interaction with EP300 modulates its DNA-binding activity. The interaction with KPNB1 is sensitive to dissociation by Ran in the GTP-bound form. Interaction with PARP1 impaired its DNA-binding activity.</text>
</comment>
<comment type="subcellular location">
    <subcellularLocation>
        <location evidence="2">Nucleus speckle</location>
    </subcellularLocation>
    <subcellularLocation>
        <location evidence="2">Cytoplasm</location>
    </subcellularLocation>
    <subcellularLocation>
        <location evidence="2">Nucleus</location>
    </subcellularLocation>
</comment>
<comment type="similarity">
    <text evidence="5">Belongs to the SRY family.</text>
</comment>
<comment type="online information" name="Protein Spotlight">
    <link uri="https://www.proteinspotlight.org/back_issues/080"/>
    <text>The tenuous nature of sex - Issue 80 of March 2007</text>
</comment>
<reference key="1">
    <citation type="journal article" date="2003" name="Mammal Study">
        <title>SRY gene structure and phylogeny in the cetacean species.</title>
        <authorList>
            <person name="Nishida S."/>
            <person name="Pastene L.A."/>
            <person name="Goto M."/>
            <person name="Koike H."/>
        </authorList>
    </citation>
    <scope>NUCLEOTIDE SEQUENCE [GENOMIC DNA]</scope>
</reference>
<sequence>MFRTVNGEDYSPAVQQRNILDFGKSHSRLWTDNGSANDRCETGGNCRESGQDRVKRPMNAFIVWSRDQRRKVALENPQMQNSEISKRLGYDWKMLTEAEKQPFFEEAQRLRAMHRDKYPGYKYRPRRKAKEATEIASRRLFSTVQPNAHRGDVVPLPIQGRLRQGHTFTNGKPVKPLTAHEHKQLTPATGASQQLDKPAPQ</sequence>
<dbReference type="EMBL" id="AB108526">
    <property type="protein sequence ID" value="BAC75658.1"/>
    <property type="molecule type" value="Genomic_DNA"/>
</dbReference>
<dbReference type="SMR" id="Q864P5"/>
<dbReference type="GO" id="GO:0005737">
    <property type="term" value="C:cytoplasm"/>
    <property type="evidence" value="ECO:0007669"/>
    <property type="project" value="UniProtKB-SubCell"/>
</dbReference>
<dbReference type="GO" id="GO:0016607">
    <property type="term" value="C:nuclear speck"/>
    <property type="evidence" value="ECO:0007669"/>
    <property type="project" value="UniProtKB-SubCell"/>
</dbReference>
<dbReference type="GO" id="GO:0005634">
    <property type="term" value="C:nucleus"/>
    <property type="evidence" value="ECO:0000250"/>
    <property type="project" value="UniProtKB"/>
</dbReference>
<dbReference type="GO" id="GO:0005516">
    <property type="term" value="F:calmodulin binding"/>
    <property type="evidence" value="ECO:0007669"/>
    <property type="project" value="UniProtKB-KW"/>
</dbReference>
<dbReference type="GO" id="GO:0001228">
    <property type="term" value="F:DNA-binding transcription activator activity, RNA polymerase II-specific"/>
    <property type="evidence" value="ECO:0007669"/>
    <property type="project" value="TreeGrafter"/>
</dbReference>
<dbReference type="GO" id="GO:0000978">
    <property type="term" value="F:RNA polymerase II cis-regulatory region sequence-specific DNA binding"/>
    <property type="evidence" value="ECO:0007669"/>
    <property type="project" value="TreeGrafter"/>
</dbReference>
<dbReference type="GO" id="GO:0030154">
    <property type="term" value="P:cell differentiation"/>
    <property type="evidence" value="ECO:0007669"/>
    <property type="project" value="UniProtKB-KW"/>
</dbReference>
<dbReference type="GO" id="GO:0030238">
    <property type="term" value="P:male sex determination"/>
    <property type="evidence" value="ECO:0007669"/>
    <property type="project" value="InterPro"/>
</dbReference>
<dbReference type="GO" id="GO:0007548">
    <property type="term" value="P:sex differentiation"/>
    <property type="evidence" value="ECO:0007669"/>
    <property type="project" value="UniProtKB-KW"/>
</dbReference>
<dbReference type="CDD" id="cd22034">
    <property type="entry name" value="HMG-box_SoxA_SRY"/>
    <property type="match status" value="1"/>
</dbReference>
<dbReference type="FunFam" id="1.10.30.10:FF:000002">
    <property type="entry name" value="transcription factor Sox-2"/>
    <property type="match status" value="1"/>
</dbReference>
<dbReference type="Gene3D" id="1.10.30.10">
    <property type="entry name" value="High mobility group box domain"/>
    <property type="match status" value="1"/>
</dbReference>
<dbReference type="InterPro" id="IPR009071">
    <property type="entry name" value="HMG_box_dom"/>
</dbReference>
<dbReference type="InterPro" id="IPR036910">
    <property type="entry name" value="HMG_box_dom_sf"/>
</dbReference>
<dbReference type="InterPro" id="IPR017253">
    <property type="entry name" value="SRY"/>
</dbReference>
<dbReference type="InterPro" id="IPR050140">
    <property type="entry name" value="SRY-related_HMG-box_TF-like"/>
</dbReference>
<dbReference type="PANTHER" id="PTHR10270:SF161">
    <property type="entry name" value="SEX-DETERMINING REGION Y PROTEIN"/>
    <property type="match status" value="1"/>
</dbReference>
<dbReference type="PANTHER" id="PTHR10270">
    <property type="entry name" value="SOX TRANSCRIPTION FACTOR"/>
    <property type="match status" value="1"/>
</dbReference>
<dbReference type="Pfam" id="PF00505">
    <property type="entry name" value="HMG_box"/>
    <property type="match status" value="1"/>
</dbReference>
<dbReference type="PIRSF" id="PIRSF037653">
    <property type="entry name" value="SRY"/>
    <property type="match status" value="1"/>
</dbReference>
<dbReference type="SMART" id="SM00398">
    <property type="entry name" value="HMG"/>
    <property type="match status" value="1"/>
</dbReference>
<dbReference type="SUPFAM" id="SSF47095">
    <property type="entry name" value="HMG-box"/>
    <property type="match status" value="1"/>
</dbReference>
<dbReference type="PROSITE" id="PS50118">
    <property type="entry name" value="HMG_BOX_2"/>
    <property type="match status" value="1"/>
</dbReference>
<evidence type="ECO:0000250" key="1">
    <source>
        <dbReference type="UniProtKB" id="P36394"/>
    </source>
</evidence>
<evidence type="ECO:0000250" key="2">
    <source>
        <dbReference type="UniProtKB" id="Q05066"/>
    </source>
</evidence>
<evidence type="ECO:0000255" key="3">
    <source>
        <dbReference type="PROSITE-ProRule" id="PRU00267"/>
    </source>
</evidence>
<evidence type="ECO:0000256" key="4">
    <source>
        <dbReference type="SAM" id="MobiDB-lite"/>
    </source>
</evidence>
<evidence type="ECO:0000305" key="5"/>